<reference key="1">
    <citation type="journal article" date="2004" name="Nature">
        <title>The DNA sequence and biology of human chromosome 19.</title>
        <authorList>
            <person name="Grimwood J."/>
            <person name="Gordon L.A."/>
            <person name="Olsen A.S."/>
            <person name="Terry A."/>
            <person name="Schmutz J."/>
            <person name="Lamerdin J.E."/>
            <person name="Hellsten U."/>
            <person name="Goodstein D."/>
            <person name="Couronne O."/>
            <person name="Tran-Gyamfi M."/>
            <person name="Aerts A."/>
            <person name="Altherr M."/>
            <person name="Ashworth L."/>
            <person name="Bajorek E."/>
            <person name="Black S."/>
            <person name="Branscomb E."/>
            <person name="Caenepeel S."/>
            <person name="Carrano A.V."/>
            <person name="Caoile C."/>
            <person name="Chan Y.M."/>
            <person name="Christensen M."/>
            <person name="Cleland C.A."/>
            <person name="Copeland A."/>
            <person name="Dalin E."/>
            <person name="Dehal P."/>
            <person name="Denys M."/>
            <person name="Detter J.C."/>
            <person name="Escobar J."/>
            <person name="Flowers D."/>
            <person name="Fotopulos D."/>
            <person name="Garcia C."/>
            <person name="Georgescu A.M."/>
            <person name="Glavina T."/>
            <person name="Gomez M."/>
            <person name="Gonzales E."/>
            <person name="Groza M."/>
            <person name="Hammon N."/>
            <person name="Hawkins T."/>
            <person name="Haydu L."/>
            <person name="Ho I."/>
            <person name="Huang W."/>
            <person name="Israni S."/>
            <person name="Jett J."/>
            <person name="Kadner K."/>
            <person name="Kimball H."/>
            <person name="Kobayashi A."/>
            <person name="Larionov V."/>
            <person name="Leem S.-H."/>
            <person name="Lopez F."/>
            <person name="Lou Y."/>
            <person name="Lowry S."/>
            <person name="Malfatti S."/>
            <person name="Martinez D."/>
            <person name="McCready P.M."/>
            <person name="Medina C."/>
            <person name="Morgan J."/>
            <person name="Nelson K."/>
            <person name="Nolan M."/>
            <person name="Ovcharenko I."/>
            <person name="Pitluck S."/>
            <person name="Pollard M."/>
            <person name="Popkie A.P."/>
            <person name="Predki P."/>
            <person name="Quan G."/>
            <person name="Ramirez L."/>
            <person name="Rash S."/>
            <person name="Retterer J."/>
            <person name="Rodriguez A."/>
            <person name="Rogers S."/>
            <person name="Salamov A."/>
            <person name="Salazar A."/>
            <person name="She X."/>
            <person name="Smith D."/>
            <person name="Slezak T."/>
            <person name="Solovyev V."/>
            <person name="Thayer N."/>
            <person name="Tice H."/>
            <person name="Tsai M."/>
            <person name="Ustaszewska A."/>
            <person name="Vo N."/>
            <person name="Wagner M."/>
            <person name="Wheeler J."/>
            <person name="Wu K."/>
            <person name="Xie G."/>
            <person name="Yang J."/>
            <person name="Dubchak I."/>
            <person name="Furey T.S."/>
            <person name="DeJong P."/>
            <person name="Dickson M."/>
            <person name="Gordon D."/>
            <person name="Eichler E.E."/>
            <person name="Pennacchio L.A."/>
            <person name="Richardson P."/>
            <person name="Stubbs L."/>
            <person name="Rokhsar D.S."/>
            <person name="Myers R.M."/>
            <person name="Rubin E.M."/>
            <person name="Lucas S.M."/>
        </authorList>
    </citation>
    <scope>NUCLEOTIDE SEQUENCE [LARGE SCALE GENOMIC DNA]</scope>
</reference>
<reference key="2">
    <citation type="journal article" date="2000" name="DNA Res.">
        <title>Prediction of the coding sequences of unidentified human genes. XVII. The complete sequences of 100 new cDNA clones from brain which code for large proteins in vitro.</title>
        <authorList>
            <person name="Nagase T."/>
            <person name="Kikuno R."/>
            <person name="Ishikawa K."/>
            <person name="Hirosawa M."/>
            <person name="Ohara O."/>
        </authorList>
    </citation>
    <scope>NUCLEOTIDE SEQUENCE [LARGE SCALE MRNA] OF 72-771</scope>
    <source>
        <tissue>Brain</tissue>
    </source>
</reference>
<reference key="3">
    <citation type="journal article" date="2004" name="Genome Res.">
        <title>The status, quality, and expansion of the NIH full-length cDNA project: the Mammalian Gene Collection (MGC).</title>
        <authorList>
            <consortium name="The MGC Project Team"/>
        </authorList>
    </citation>
    <scope>NUCLEOTIDE SEQUENCE [LARGE SCALE MRNA] OF 230-771</scope>
    <source>
        <tissue>Uterus</tissue>
    </source>
</reference>
<reference key="4">
    <citation type="journal article" date="2006" name="Neuron">
        <title>SALM synaptic cell adhesion-like molecules regulate the differentiation of excitatory synapses.</title>
        <authorList>
            <person name="Ko J."/>
            <person name="Kim S."/>
            <person name="Chung H.S."/>
            <person name="Kim K."/>
            <person name="Han K."/>
            <person name="Kim H."/>
            <person name="Jun H."/>
            <person name="Kaang B.-K."/>
            <person name="Kim E."/>
        </authorList>
    </citation>
    <scope>INTERACTION WITH DLG1; DLG2; DLG3 AND DLG4</scope>
</reference>
<reference key="5">
    <citation type="journal article" date="2007" name="Science">
        <title>ATM and ATR substrate analysis reveals extensive protein networks responsive to DNA damage.</title>
        <authorList>
            <person name="Matsuoka S."/>
            <person name="Ballif B.A."/>
            <person name="Smogorzewska A."/>
            <person name="McDonald E.R. III"/>
            <person name="Hurov K.E."/>
            <person name="Luo J."/>
            <person name="Bakalarski C.E."/>
            <person name="Zhao Z."/>
            <person name="Solimini N."/>
            <person name="Lerenthal Y."/>
            <person name="Shiloh Y."/>
            <person name="Gygi S.P."/>
            <person name="Elledge S.J."/>
        </authorList>
    </citation>
    <scope>PHOSPHORYLATION [LARGE SCALE ANALYSIS] AT SER-613</scope>
    <scope>IDENTIFICATION BY MASS SPECTROMETRY [LARGE SCALE ANALYSIS]</scope>
    <source>
        <tissue>Embryonic kidney</tissue>
    </source>
</reference>
<reference key="6">
    <citation type="journal article" date="2009" name="Sci. Signal.">
        <title>Quantitative phosphoproteomic analysis of T cell receptor signaling reveals system-wide modulation of protein-protein interactions.</title>
        <authorList>
            <person name="Mayya V."/>
            <person name="Lundgren D.H."/>
            <person name="Hwang S.-I."/>
            <person name="Rezaul K."/>
            <person name="Wu L."/>
            <person name="Eng J.K."/>
            <person name="Rodionov V."/>
            <person name="Han D.K."/>
        </authorList>
    </citation>
    <scope>IDENTIFICATION BY MASS SPECTROMETRY [LARGE SCALE ANALYSIS]</scope>
    <source>
        <tissue>Leukemic T-cell</tissue>
    </source>
</reference>
<reference key="7">
    <citation type="journal article" date="2013" name="J. Proteome Res.">
        <title>Toward a comprehensive characterization of a human cancer cell phosphoproteome.</title>
        <authorList>
            <person name="Zhou H."/>
            <person name="Di Palma S."/>
            <person name="Preisinger C."/>
            <person name="Peng M."/>
            <person name="Polat A.N."/>
            <person name="Heck A.J."/>
            <person name="Mohammed S."/>
        </authorList>
    </citation>
    <scope>PHOSPHORYLATION [LARGE SCALE ANALYSIS] AT SER-718</scope>
    <scope>IDENTIFICATION BY MASS SPECTROMETRY [LARGE SCALE ANALYSIS]</scope>
    <source>
        <tissue>Erythroleukemia</tissue>
    </source>
</reference>
<evidence type="ECO:0000250" key="1"/>
<evidence type="ECO:0000255" key="2"/>
<evidence type="ECO:0000255" key="3">
    <source>
        <dbReference type="PROSITE-ProRule" id="PRU00114"/>
    </source>
</evidence>
<evidence type="ECO:0000255" key="4">
    <source>
        <dbReference type="PROSITE-ProRule" id="PRU00316"/>
    </source>
</evidence>
<evidence type="ECO:0000256" key="5">
    <source>
        <dbReference type="SAM" id="MobiDB-lite"/>
    </source>
</evidence>
<evidence type="ECO:0000305" key="6"/>
<evidence type="ECO:0007744" key="7">
    <source>
    </source>
</evidence>
<evidence type="ECO:0007744" key="8">
    <source>
    </source>
</evidence>
<name>LRFN1_HUMAN</name>
<dbReference type="EMBL" id="AC011445">
    <property type="status" value="NOT_ANNOTATED_CDS"/>
    <property type="molecule type" value="Genomic_DNA"/>
</dbReference>
<dbReference type="EMBL" id="AB040917">
    <property type="protein sequence ID" value="BAA96008.1"/>
    <property type="molecule type" value="mRNA"/>
</dbReference>
<dbReference type="EMBL" id="BC025310">
    <property type="protein sequence ID" value="AAH25310.1"/>
    <property type="molecule type" value="mRNA"/>
</dbReference>
<dbReference type="CCDS" id="CCDS46071.1"/>
<dbReference type="RefSeq" id="NP_065913.1">
    <property type="nucleotide sequence ID" value="NM_020862.2"/>
</dbReference>
<dbReference type="RefSeq" id="XP_005259159.1">
    <property type="nucleotide sequence ID" value="XM_005259102.4"/>
</dbReference>
<dbReference type="RefSeq" id="XP_016882522.1">
    <property type="nucleotide sequence ID" value="XM_017027033.2"/>
</dbReference>
<dbReference type="RefSeq" id="XP_054177521.1">
    <property type="nucleotide sequence ID" value="XM_054321546.1"/>
</dbReference>
<dbReference type="RefSeq" id="XP_054189223.1">
    <property type="nucleotide sequence ID" value="XM_054333248.1"/>
</dbReference>
<dbReference type="SMR" id="Q9P244"/>
<dbReference type="BioGRID" id="121668">
    <property type="interactions" value="150"/>
</dbReference>
<dbReference type="FunCoup" id="Q9P244">
    <property type="interactions" value="525"/>
</dbReference>
<dbReference type="IntAct" id="Q9P244">
    <property type="interactions" value="50"/>
</dbReference>
<dbReference type="MINT" id="Q9P244"/>
<dbReference type="STRING" id="9606.ENSP00000248668"/>
<dbReference type="GlyCosmos" id="Q9P244">
    <property type="glycosylation" value="2 sites, No reported glycans"/>
</dbReference>
<dbReference type="GlyGen" id="Q9P244">
    <property type="glycosylation" value="5 sites, 4 N-linked glycans (4 sites)"/>
</dbReference>
<dbReference type="iPTMnet" id="Q9P244"/>
<dbReference type="PhosphoSitePlus" id="Q9P244"/>
<dbReference type="BioMuta" id="LRFN1"/>
<dbReference type="DMDM" id="189028858"/>
<dbReference type="jPOST" id="Q9P244"/>
<dbReference type="MassIVE" id="Q9P244"/>
<dbReference type="PaxDb" id="9606-ENSP00000248668"/>
<dbReference type="PeptideAtlas" id="Q9P244"/>
<dbReference type="ProteomicsDB" id="83729"/>
<dbReference type="Antibodypedia" id="30291">
    <property type="antibodies" value="71 antibodies from 25 providers"/>
</dbReference>
<dbReference type="DNASU" id="57622"/>
<dbReference type="Ensembl" id="ENST00000248668.5">
    <property type="protein sequence ID" value="ENSP00000248668.4"/>
    <property type="gene ID" value="ENSG00000128011.5"/>
</dbReference>
<dbReference type="Ensembl" id="ENST00000709040.1">
    <property type="protein sequence ID" value="ENSP00000517478.1"/>
    <property type="gene ID" value="ENSG00000291874.1"/>
</dbReference>
<dbReference type="GeneID" id="57622"/>
<dbReference type="KEGG" id="hsa:57622"/>
<dbReference type="MANE-Select" id="ENST00000248668.5">
    <property type="protein sequence ID" value="ENSP00000248668.4"/>
    <property type="RefSeq nucleotide sequence ID" value="NM_020862.2"/>
    <property type="RefSeq protein sequence ID" value="NP_065913.1"/>
</dbReference>
<dbReference type="UCSC" id="uc002okw.3">
    <property type="organism name" value="human"/>
</dbReference>
<dbReference type="AGR" id="HGNC:29290"/>
<dbReference type="CTD" id="57622"/>
<dbReference type="GeneCards" id="LRFN1"/>
<dbReference type="HGNC" id="HGNC:29290">
    <property type="gene designation" value="LRFN1"/>
</dbReference>
<dbReference type="HPA" id="ENSG00000128011">
    <property type="expression patterns" value="Tissue enhanced (brain)"/>
</dbReference>
<dbReference type="MIM" id="612807">
    <property type="type" value="gene"/>
</dbReference>
<dbReference type="neXtProt" id="NX_Q9P244"/>
<dbReference type="OpenTargets" id="ENSG00000128011"/>
<dbReference type="PharmGKB" id="PA134871732"/>
<dbReference type="VEuPathDB" id="HostDB:ENSG00000128011"/>
<dbReference type="eggNOG" id="KOG0619">
    <property type="taxonomic scope" value="Eukaryota"/>
</dbReference>
<dbReference type="GeneTree" id="ENSGT00940000160922"/>
<dbReference type="HOGENOM" id="CLU_016998_0_1_1"/>
<dbReference type="InParanoid" id="Q9P244"/>
<dbReference type="OMA" id="GSTEWML"/>
<dbReference type="OrthoDB" id="1394818at2759"/>
<dbReference type="PAN-GO" id="Q9P244">
    <property type="GO annotations" value="2 GO annotations based on evolutionary models"/>
</dbReference>
<dbReference type="PhylomeDB" id="Q9P244"/>
<dbReference type="TreeFam" id="TF350185"/>
<dbReference type="PathwayCommons" id="Q9P244"/>
<dbReference type="Reactome" id="R-HSA-8849932">
    <property type="pathway name" value="Synaptic adhesion-like molecules"/>
</dbReference>
<dbReference type="SignaLink" id="Q9P244"/>
<dbReference type="SIGNOR" id="Q9P244"/>
<dbReference type="BioGRID-ORCS" id="57622">
    <property type="hits" value="14 hits in 1164 CRISPR screens"/>
</dbReference>
<dbReference type="ChiTaRS" id="LRFN1">
    <property type="organism name" value="human"/>
</dbReference>
<dbReference type="GenomeRNAi" id="57622"/>
<dbReference type="Pharos" id="Q9P244">
    <property type="development level" value="Tbio"/>
</dbReference>
<dbReference type="PRO" id="PR:Q9P244"/>
<dbReference type="Proteomes" id="UP000005640">
    <property type="component" value="Chromosome 19"/>
</dbReference>
<dbReference type="RNAct" id="Q9P244">
    <property type="molecule type" value="protein"/>
</dbReference>
<dbReference type="Bgee" id="ENSG00000128011">
    <property type="expression patterns" value="Expressed in medial globus pallidus and 135 other cell types or tissues"/>
</dbReference>
<dbReference type="GO" id="GO:0009986">
    <property type="term" value="C:cell surface"/>
    <property type="evidence" value="ECO:0007669"/>
    <property type="project" value="Ensembl"/>
</dbReference>
<dbReference type="GO" id="GO:0005886">
    <property type="term" value="C:plasma membrane"/>
    <property type="evidence" value="ECO:0000304"/>
    <property type="project" value="Reactome"/>
</dbReference>
<dbReference type="GO" id="GO:0098839">
    <property type="term" value="C:postsynaptic density membrane"/>
    <property type="evidence" value="ECO:0000318"/>
    <property type="project" value="GO_Central"/>
</dbReference>
<dbReference type="GO" id="GO:0099151">
    <property type="term" value="P:regulation of postsynaptic density assembly"/>
    <property type="evidence" value="ECO:0007669"/>
    <property type="project" value="Ensembl"/>
</dbReference>
<dbReference type="CDD" id="cd00063">
    <property type="entry name" value="FN3"/>
    <property type="match status" value="1"/>
</dbReference>
<dbReference type="FunFam" id="2.60.40.10:FF:000235">
    <property type="entry name" value="Leucine-rich repeat and fibronectin type III domain-containing 2"/>
    <property type="match status" value="1"/>
</dbReference>
<dbReference type="FunFam" id="2.60.40.10:FF:000091">
    <property type="entry name" value="Leucine-rich repeat and fibronectin type III domain-containing protein 1"/>
    <property type="match status" value="1"/>
</dbReference>
<dbReference type="FunFam" id="3.80.10.10:FF:000016">
    <property type="entry name" value="Leucine-rich repeat and fibronectin type III domain-containing protein 1"/>
    <property type="match status" value="1"/>
</dbReference>
<dbReference type="FunFam" id="3.80.10.10:FF:000019">
    <property type="entry name" value="leucine-rich repeat and fibronectin type III domain-containing protein 1"/>
    <property type="match status" value="1"/>
</dbReference>
<dbReference type="Gene3D" id="2.60.40.10">
    <property type="entry name" value="Immunoglobulins"/>
    <property type="match status" value="2"/>
</dbReference>
<dbReference type="Gene3D" id="3.80.10.10">
    <property type="entry name" value="Ribonuclease Inhibitor"/>
    <property type="match status" value="2"/>
</dbReference>
<dbReference type="InterPro" id="IPR000483">
    <property type="entry name" value="Cys-rich_flank_reg_C"/>
</dbReference>
<dbReference type="InterPro" id="IPR003961">
    <property type="entry name" value="FN3_dom"/>
</dbReference>
<dbReference type="InterPro" id="IPR036116">
    <property type="entry name" value="FN3_sf"/>
</dbReference>
<dbReference type="InterPro" id="IPR007110">
    <property type="entry name" value="Ig-like_dom"/>
</dbReference>
<dbReference type="InterPro" id="IPR036179">
    <property type="entry name" value="Ig-like_dom_sf"/>
</dbReference>
<dbReference type="InterPro" id="IPR013783">
    <property type="entry name" value="Ig-like_fold"/>
</dbReference>
<dbReference type="InterPro" id="IPR013098">
    <property type="entry name" value="Ig_I-set"/>
</dbReference>
<dbReference type="InterPro" id="IPR003599">
    <property type="entry name" value="Ig_sub"/>
</dbReference>
<dbReference type="InterPro" id="IPR003598">
    <property type="entry name" value="Ig_sub2"/>
</dbReference>
<dbReference type="InterPro" id="IPR001611">
    <property type="entry name" value="Leu-rich_rpt"/>
</dbReference>
<dbReference type="InterPro" id="IPR003591">
    <property type="entry name" value="Leu-rich_rpt_typical-subtyp"/>
</dbReference>
<dbReference type="InterPro" id="IPR050467">
    <property type="entry name" value="LRFN"/>
</dbReference>
<dbReference type="InterPro" id="IPR032675">
    <property type="entry name" value="LRR_dom_sf"/>
</dbReference>
<dbReference type="PANTHER" id="PTHR45842:SF7">
    <property type="entry name" value="LEUCINE-RICH REPEAT AND FIBRONECTIN TYPE III DOMAIN-CONTAINING PROTEIN 1"/>
    <property type="match status" value="1"/>
</dbReference>
<dbReference type="PANTHER" id="PTHR45842">
    <property type="entry name" value="SYNAPTIC ADHESION-LIKE MOLECULE SALM"/>
    <property type="match status" value="1"/>
</dbReference>
<dbReference type="Pfam" id="PF00041">
    <property type="entry name" value="fn3"/>
    <property type="match status" value="1"/>
</dbReference>
<dbReference type="Pfam" id="PF07679">
    <property type="entry name" value="I-set"/>
    <property type="match status" value="1"/>
</dbReference>
<dbReference type="Pfam" id="PF13855">
    <property type="entry name" value="LRR_8"/>
    <property type="match status" value="2"/>
</dbReference>
<dbReference type="SMART" id="SM00060">
    <property type="entry name" value="FN3"/>
    <property type="match status" value="1"/>
</dbReference>
<dbReference type="SMART" id="SM00409">
    <property type="entry name" value="IG"/>
    <property type="match status" value="1"/>
</dbReference>
<dbReference type="SMART" id="SM00408">
    <property type="entry name" value="IGc2"/>
    <property type="match status" value="1"/>
</dbReference>
<dbReference type="SMART" id="SM00369">
    <property type="entry name" value="LRR_TYP"/>
    <property type="match status" value="6"/>
</dbReference>
<dbReference type="SMART" id="SM00082">
    <property type="entry name" value="LRRCT"/>
    <property type="match status" value="1"/>
</dbReference>
<dbReference type="SUPFAM" id="SSF49265">
    <property type="entry name" value="Fibronectin type III"/>
    <property type="match status" value="1"/>
</dbReference>
<dbReference type="SUPFAM" id="SSF48726">
    <property type="entry name" value="Immunoglobulin"/>
    <property type="match status" value="1"/>
</dbReference>
<dbReference type="SUPFAM" id="SSF52058">
    <property type="entry name" value="L domain-like"/>
    <property type="match status" value="1"/>
</dbReference>
<dbReference type="PROSITE" id="PS50853">
    <property type="entry name" value="FN3"/>
    <property type="match status" value="1"/>
</dbReference>
<dbReference type="PROSITE" id="PS50835">
    <property type="entry name" value="IG_LIKE"/>
    <property type="match status" value="1"/>
</dbReference>
<dbReference type="PROSITE" id="PS51450">
    <property type="entry name" value="LRR"/>
    <property type="match status" value="6"/>
</dbReference>
<keyword id="KW-1003">Cell membrane</keyword>
<keyword id="KW-1015">Disulfide bond</keyword>
<keyword id="KW-0325">Glycoprotein</keyword>
<keyword id="KW-0393">Immunoglobulin domain</keyword>
<keyword id="KW-0433">Leucine-rich repeat</keyword>
<keyword id="KW-0472">Membrane</keyword>
<keyword id="KW-0597">Phosphoprotein</keyword>
<keyword id="KW-0628">Postsynaptic cell membrane</keyword>
<keyword id="KW-1267">Proteomics identification</keyword>
<keyword id="KW-1185">Reference proteome</keyword>
<keyword id="KW-0677">Repeat</keyword>
<keyword id="KW-0732">Signal</keyword>
<keyword id="KW-0770">Synapse</keyword>
<keyword id="KW-0812">Transmembrane</keyword>
<keyword id="KW-1133">Transmembrane helix</keyword>
<accession>Q9P244</accession>
<accession>Q8TBS9</accession>
<proteinExistence type="evidence at protein level"/>
<sequence>MAPGPFSSALLSPPPAALPFLLLLWAGASRGQPCPGRCICQNVAPTLTMLCAKTGLLFVPPAIDRRVVELRLTDNFIAAVRRRDFANMTSLVHLTLSRNTIGQVAAGAFADLRALRALHLDSNRLAEVRGDQLRGLGNLRHLILGNNQIRRVESAAFDAFLSTVEDLDLSYNNLEALPWEAVGQMVNLNTLTLDHNLIDHIAEGTFVQLHKLVRLDMTSNRLHKLPPDGLFLRSQGTGPKPPTPLTVSFGGNPLHCNCELLWLRRLTREDDLETCATPEHLTDRYFWSIPEEEFLCEPPLITRQAGGRALVVEGQAVSLRCRAVGDPEPVVHWVAPDGRLLGNSSRTRVRGDGTLDVTITTLRDSGTFTCIASNAAGEATAPVEVCVVPLPLMAPPPAAPPPLTEPGSSDIATPGRPGANDSAAERRLVAAELTSNSVLIRWPAQRPVPGIRMYQVQYNSSVDDSLVYRMIPSTSQTFLVNDLAAGRAYDLCVLAVYDDGATALPATRVVGCVQFTTAGDPAPCRPLRAHFLGGTMIIAIGGVIVASVLVFIVLLMIRYKVYGDGDSRRVKGSRSLPRVSHVCSQTNGAGTGAAQAPALPAQDHYEALREVESQAAPAVAVEAKAMEAETASAEPEVVLGRSLGGSATSLCLLPSEETSGEESRAAVGPRRSRSGALEPPTSAPPTLALVPGGAAARPRPQQRYSFDGDYGALFQSHSYPRRARRTKRHRSTPHLDGAGGGAAGEDGDLGLGSARACLAFTSTEWMLESTV</sequence>
<organism>
    <name type="scientific">Homo sapiens</name>
    <name type="common">Human</name>
    <dbReference type="NCBI Taxonomy" id="9606"/>
    <lineage>
        <taxon>Eukaryota</taxon>
        <taxon>Metazoa</taxon>
        <taxon>Chordata</taxon>
        <taxon>Craniata</taxon>
        <taxon>Vertebrata</taxon>
        <taxon>Euteleostomi</taxon>
        <taxon>Mammalia</taxon>
        <taxon>Eutheria</taxon>
        <taxon>Euarchontoglires</taxon>
        <taxon>Primates</taxon>
        <taxon>Haplorrhini</taxon>
        <taxon>Catarrhini</taxon>
        <taxon>Hominidae</taxon>
        <taxon>Homo</taxon>
    </lineage>
</organism>
<gene>
    <name type="primary">LRFN1</name>
    <name type="synonym">KIAA1484</name>
    <name type="synonym">SALM2</name>
</gene>
<feature type="signal peptide" evidence="2">
    <location>
        <begin position="1"/>
        <end position="31"/>
    </location>
</feature>
<feature type="chain" id="PRO_0000334145" description="Leucine-rich repeat and fibronectin type III domain-containing protein 1">
    <location>
        <begin position="32"/>
        <end position="771"/>
    </location>
</feature>
<feature type="topological domain" description="Extracellular" evidence="2">
    <location>
        <begin position="32"/>
        <end position="536"/>
    </location>
</feature>
<feature type="transmembrane region" description="Helical" evidence="2">
    <location>
        <begin position="537"/>
        <end position="557"/>
    </location>
</feature>
<feature type="topological domain" description="Cytoplasmic" evidence="2">
    <location>
        <begin position="558"/>
        <end position="771"/>
    </location>
</feature>
<feature type="domain" description="LRRNT">
    <location>
        <begin position="32"/>
        <end position="65"/>
    </location>
</feature>
<feature type="repeat" description="LRR 1">
    <location>
        <begin position="66"/>
        <end position="87"/>
    </location>
</feature>
<feature type="repeat" description="LRR 2">
    <location>
        <begin position="90"/>
        <end position="111"/>
    </location>
</feature>
<feature type="repeat" description="LRR 3">
    <location>
        <begin position="114"/>
        <end position="135"/>
    </location>
</feature>
<feature type="repeat" description="LRR 4">
    <location>
        <begin position="138"/>
        <end position="159"/>
    </location>
</feature>
<feature type="repeat" description="LRR 5">
    <location>
        <begin position="163"/>
        <end position="184"/>
    </location>
</feature>
<feature type="repeat" description="LRR 6">
    <location>
        <begin position="187"/>
        <end position="208"/>
    </location>
</feature>
<feature type="repeat" description="LRR 7">
    <location>
        <begin position="211"/>
        <end position="232"/>
    </location>
</feature>
<feature type="domain" description="LRRCT">
    <location>
        <begin position="252"/>
        <end position="298"/>
    </location>
</feature>
<feature type="domain" description="Ig-like">
    <location>
        <begin position="299"/>
        <end position="386"/>
    </location>
</feature>
<feature type="domain" description="Fibronectin type-III" evidence="4">
    <location>
        <begin position="424"/>
        <end position="520"/>
    </location>
</feature>
<feature type="region of interest" description="Disordered" evidence="5">
    <location>
        <begin position="397"/>
        <end position="422"/>
    </location>
</feature>
<feature type="region of interest" description="Disordered" evidence="5">
    <location>
        <begin position="654"/>
        <end position="743"/>
    </location>
</feature>
<feature type="short sequence motif" description="PDZ-binding">
    <location>
        <begin position="768"/>
        <end position="771"/>
    </location>
</feature>
<feature type="compositionally biased region" description="Basic residues" evidence="5">
    <location>
        <begin position="719"/>
        <end position="732"/>
    </location>
</feature>
<feature type="modified residue" description="Phosphoserine" evidence="7">
    <location>
        <position position="613"/>
    </location>
</feature>
<feature type="modified residue" description="Phosphoserine" evidence="8">
    <location>
        <position position="718"/>
    </location>
</feature>
<feature type="glycosylation site" description="N-linked (GlcNAc...) asparagine" evidence="2">
    <location>
        <position position="87"/>
    </location>
</feature>
<feature type="glycosylation site" description="N-linked (GlcNAc...) asparagine" evidence="2">
    <location>
        <position position="343"/>
    </location>
</feature>
<feature type="disulfide bond" evidence="3">
    <location>
        <begin position="321"/>
        <end position="370"/>
    </location>
</feature>
<comment type="function">
    <text evidence="1">Promotes neurite outgrowth in hippocampal neurons. Involved in the regulation and maintenance of excitatory synapses. Induces the clustering of excitatory postsynaptic proteins, including DLG4, DLGAP1, GRIA1 and GRIN1 (By similarity).</text>
</comment>
<comment type="subunit">
    <text evidence="1">Can form heteromeric complexes with LRFN2, LRFN3, LRFN4 and LRFN5 (By similarity). Forms homomeric complexes, but not across cell junctions (By similarity). Interacts with DLG1, DLG2, DLG3 and DLG4. Interacts with 2 AMPA receptor subunits GRIA1 and GRIA2 and NMDA receptor subunit GRIN1 (By similarity).</text>
</comment>
<comment type="subcellular location">
    <subcellularLocation>
        <location evidence="1">Membrane</location>
        <topology evidence="1">Single-pass type I membrane protein</topology>
    </subcellularLocation>
    <subcellularLocation>
        <location evidence="1">Synapse</location>
    </subcellularLocation>
    <subcellularLocation>
        <location evidence="1">Postsynaptic density membrane</location>
    </subcellularLocation>
    <text evidence="1">Detected in excitatory, but not inhibitory, synaptic plasma membrane.</text>
</comment>
<comment type="domain">
    <text evidence="1">The PDZ-binding motif is required for neurite outgrowth promotion and for DLG1-, DLG3- and DLG4-binding.</text>
</comment>
<comment type="PTM">
    <text evidence="1">Glycosylated.</text>
</comment>
<comment type="similarity">
    <text evidence="6">Belongs to the LRFN family.</text>
</comment>
<protein>
    <recommendedName>
        <fullName>Leucine-rich repeat and fibronectin type III domain-containing protein 1</fullName>
    </recommendedName>
    <alternativeName>
        <fullName>Synaptic adhesion-like molecule 2</fullName>
    </alternativeName>
</protein>